<protein>
    <recommendedName>
        <fullName evidence="2">Small ribosomal subunit protein uS12</fullName>
    </recommendedName>
    <alternativeName>
        <fullName evidence="4">30S ribosomal protein S12</fullName>
    </alternativeName>
</protein>
<proteinExistence type="inferred from homology"/>
<reference key="1">
    <citation type="journal article" date="2009" name="Infect. Immun.">
        <title>Comparative genomics reveal extensive transposon-mediated genomic plasticity and diversity among potential effector proteins within the genus Coxiella.</title>
        <authorList>
            <person name="Beare P.A."/>
            <person name="Unsworth N."/>
            <person name="Andoh M."/>
            <person name="Voth D.E."/>
            <person name="Omsland A."/>
            <person name="Gilk S.D."/>
            <person name="Williams K.P."/>
            <person name="Sobral B.W."/>
            <person name="Kupko J.J. III"/>
            <person name="Porcella S.F."/>
            <person name="Samuel J.E."/>
            <person name="Heinzen R.A."/>
        </authorList>
    </citation>
    <scope>NUCLEOTIDE SEQUENCE [LARGE SCALE GENOMIC DNA]</scope>
    <source>
        <strain>Dugway 5J108-111</strain>
    </source>
</reference>
<feature type="chain" id="PRO_1000080390" description="Small ribosomal subunit protein uS12">
    <location>
        <begin position="1"/>
        <end position="124"/>
    </location>
</feature>
<feature type="region of interest" description="Disordered" evidence="3">
    <location>
        <begin position="1"/>
        <end position="25"/>
    </location>
</feature>
<feature type="region of interest" description="Disordered" evidence="3">
    <location>
        <begin position="103"/>
        <end position="124"/>
    </location>
</feature>
<feature type="modified residue" description="3-methylthioaspartic acid" evidence="1">
    <location>
        <position position="89"/>
    </location>
</feature>
<organism>
    <name type="scientific">Coxiella burnetii (strain Dugway 5J108-111)</name>
    <dbReference type="NCBI Taxonomy" id="434922"/>
    <lineage>
        <taxon>Bacteria</taxon>
        <taxon>Pseudomonadati</taxon>
        <taxon>Pseudomonadota</taxon>
        <taxon>Gammaproteobacteria</taxon>
        <taxon>Legionellales</taxon>
        <taxon>Coxiellaceae</taxon>
        <taxon>Coxiella</taxon>
    </lineage>
</organism>
<name>RS12_COXBN</name>
<keyword id="KW-0488">Methylation</keyword>
<keyword id="KW-0687">Ribonucleoprotein</keyword>
<keyword id="KW-0689">Ribosomal protein</keyword>
<keyword id="KW-0694">RNA-binding</keyword>
<keyword id="KW-0699">rRNA-binding</keyword>
<keyword id="KW-0820">tRNA-binding</keyword>
<comment type="function">
    <text evidence="2">With S4 and S5 plays an important role in translational accuracy.</text>
</comment>
<comment type="function">
    <text evidence="2">Interacts with and stabilizes bases of the 16S rRNA that are involved in tRNA selection in the A site and with the mRNA backbone. Located at the interface of the 30S and 50S subunits, it traverses the body of the 30S subunit contacting proteins on the other side and probably holding the rRNA structure together. The combined cluster of proteins S8, S12 and S17 appears to hold together the shoulder and platform of the 30S subunit.</text>
</comment>
<comment type="subunit">
    <text evidence="2">Part of the 30S ribosomal subunit. Contacts proteins S8 and S17. May interact with IF1 in the 30S initiation complex.</text>
</comment>
<comment type="similarity">
    <text evidence="2">Belongs to the universal ribosomal protein uS12 family.</text>
</comment>
<comment type="sequence caution" evidence="4">
    <conflict type="erroneous initiation">
        <sequence resource="EMBL-CDS" id="ABS78207"/>
    </conflict>
</comment>
<dbReference type="EMBL" id="CP000733">
    <property type="protein sequence ID" value="ABS78207.2"/>
    <property type="status" value="ALT_INIT"/>
    <property type="molecule type" value="Genomic_DNA"/>
</dbReference>
<dbReference type="RefSeq" id="WP_005771621.1">
    <property type="nucleotide sequence ID" value="NC_009727.1"/>
</dbReference>
<dbReference type="SMR" id="A9KD36"/>
<dbReference type="KEGG" id="cbd:CBUD_1859"/>
<dbReference type="HOGENOM" id="CLU_104295_1_2_6"/>
<dbReference type="Proteomes" id="UP000008555">
    <property type="component" value="Chromosome"/>
</dbReference>
<dbReference type="GO" id="GO:0015935">
    <property type="term" value="C:small ribosomal subunit"/>
    <property type="evidence" value="ECO:0007669"/>
    <property type="project" value="InterPro"/>
</dbReference>
<dbReference type="GO" id="GO:0019843">
    <property type="term" value="F:rRNA binding"/>
    <property type="evidence" value="ECO:0007669"/>
    <property type="project" value="UniProtKB-UniRule"/>
</dbReference>
<dbReference type="GO" id="GO:0003735">
    <property type="term" value="F:structural constituent of ribosome"/>
    <property type="evidence" value="ECO:0007669"/>
    <property type="project" value="InterPro"/>
</dbReference>
<dbReference type="GO" id="GO:0000049">
    <property type="term" value="F:tRNA binding"/>
    <property type="evidence" value="ECO:0007669"/>
    <property type="project" value="UniProtKB-UniRule"/>
</dbReference>
<dbReference type="GO" id="GO:0006412">
    <property type="term" value="P:translation"/>
    <property type="evidence" value="ECO:0007669"/>
    <property type="project" value="UniProtKB-UniRule"/>
</dbReference>
<dbReference type="CDD" id="cd03368">
    <property type="entry name" value="Ribosomal_S12"/>
    <property type="match status" value="1"/>
</dbReference>
<dbReference type="FunFam" id="2.40.50.140:FF:000001">
    <property type="entry name" value="30S ribosomal protein S12"/>
    <property type="match status" value="1"/>
</dbReference>
<dbReference type="Gene3D" id="2.40.50.140">
    <property type="entry name" value="Nucleic acid-binding proteins"/>
    <property type="match status" value="1"/>
</dbReference>
<dbReference type="HAMAP" id="MF_00403_B">
    <property type="entry name" value="Ribosomal_uS12_B"/>
    <property type="match status" value="1"/>
</dbReference>
<dbReference type="InterPro" id="IPR012340">
    <property type="entry name" value="NA-bd_OB-fold"/>
</dbReference>
<dbReference type="InterPro" id="IPR006032">
    <property type="entry name" value="Ribosomal_uS12"/>
</dbReference>
<dbReference type="InterPro" id="IPR005679">
    <property type="entry name" value="Ribosomal_uS12_bac"/>
</dbReference>
<dbReference type="NCBIfam" id="TIGR00981">
    <property type="entry name" value="rpsL_bact"/>
    <property type="match status" value="1"/>
</dbReference>
<dbReference type="PANTHER" id="PTHR11652">
    <property type="entry name" value="30S RIBOSOMAL PROTEIN S12 FAMILY MEMBER"/>
    <property type="match status" value="1"/>
</dbReference>
<dbReference type="Pfam" id="PF00164">
    <property type="entry name" value="Ribosom_S12_S23"/>
    <property type="match status" value="1"/>
</dbReference>
<dbReference type="PIRSF" id="PIRSF002133">
    <property type="entry name" value="Ribosomal_S12/S23"/>
    <property type="match status" value="1"/>
</dbReference>
<dbReference type="PRINTS" id="PR01034">
    <property type="entry name" value="RIBOSOMALS12"/>
</dbReference>
<dbReference type="SUPFAM" id="SSF50249">
    <property type="entry name" value="Nucleic acid-binding proteins"/>
    <property type="match status" value="1"/>
</dbReference>
<dbReference type="PROSITE" id="PS00055">
    <property type="entry name" value="RIBOSOMAL_S12"/>
    <property type="match status" value="1"/>
</dbReference>
<gene>
    <name evidence="2" type="primary">rpsL</name>
    <name type="ordered locus">CBUD_1859</name>
</gene>
<accession>A9KD36</accession>
<evidence type="ECO:0000250" key="1"/>
<evidence type="ECO:0000255" key="2">
    <source>
        <dbReference type="HAMAP-Rule" id="MF_00403"/>
    </source>
</evidence>
<evidence type="ECO:0000256" key="3">
    <source>
        <dbReference type="SAM" id="MobiDB-lite"/>
    </source>
</evidence>
<evidence type="ECO:0000305" key="4"/>
<sequence>MARINQLVRKPRRARAKKSDVPALEGCPQRRGVCTRVYTTTPKKPNSALRKVARVRITNGAEVTAYIGGEGHNLQEHSVVLIRGGRVKDLPGVRYHIVRGSLDTAGVSGRRRGRSKYGEKKPKE</sequence>